<proteinExistence type="inferred from homology"/>
<evidence type="ECO:0000250" key="1">
    <source>
        <dbReference type="UniProtKB" id="P69937"/>
    </source>
</evidence>
<evidence type="ECO:0000255" key="2"/>
<evidence type="ECO:0000305" key="3"/>
<accession>Q7CP98</accession>
<organism>
    <name type="scientific">Salmonella typhimurium (strain LT2 / SGSC1412 / ATCC 700720)</name>
    <dbReference type="NCBI Taxonomy" id="99287"/>
    <lineage>
        <taxon>Bacteria</taxon>
        <taxon>Pseudomonadati</taxon>
        <taxon>Pseudomonadota</taxon>
        <taxon>Gammaproteobacteria</taxon>
        <taxon>Enterobacterales</taxon>
        <taxon>Enterobacteriaceae</taxon>
        <taxon>Salmonella</taxon>
    </lineage>
</organism>
<sequence length="105" mass="10869">MSWIILLIAGLLEVVWAVGLKYTHGFSRLTPSIITITAMVISMALLSWAMKTLPVGTAYAIWTGIGAVGAAITGILLLGESASPARLLSLGLIVAGIIGLKLSAH</sequence>
<dbReference type="EMBL" id="AE006468">
    <property type="protein sequence ID" value="AAL23161.1"/>
    <property type="molecule type" value="Genomic_DNA"/>
</dbReference>
<dbReference type="RefSeq" id="NP_463202.1">
    <property type="nucleotide sequence ID" value="NC_003197.2"/>
</dbReference>
<dbReference type="RefSeq" id="WP_000118469.1">
    <property type="nucleotide sequence ID" value="NC_003197.2"/>
</dbReference>
<dbReference type="SMR" id="Q7CP98"/>
<dbReference type="STRING" id="99287.STM4338"/>
<dbReference type="PaxDb" id="99287-STM4338"/>
<dbReference type="GeneID" id="1255864"/>
<dbReference type="KEGG" id="stm:STM4338"/>
<dbReference type="PATRIC" id="fig|99287.12.peg.4565"/>
<dbReference type="HOGENOM" id="CLU_133067_1_2_6"/>
<dbReference type="OMA" id="CLWMAQK"/>
<dbReference type="PhylomeDB" id="Q7CP98"/>
<dbReference type="BioCyc" id="SENT99287:STM4338-MONOMER"/>
<dbReference type="Proteomes" id="UP000001014">
    <property type="component" value="Chromosome"/>
</dbReference>
<dbReference type="GO" id="GO:0005886">
    <property type="term" value="C:plasma membrane"/>
    <property type="evidence" value="ECO:0000318"/>
    <property type="project" value="GO_Central"/>
</dbReference>
<dbReference type="GO" id="GO:0022857">
    <property type="term" value="F:transmembrane transporter activity"/>
    <property type="evidence" value="ECO:0000318"/>
    <property type="project" value="GO_Central"/>
</dbReference>
<dbReference type="GO" id="GO:0006811">
    <property type="term" value="P:monoatomic ion transport"/>
    <property type="evidence" value="ECO:0007669"/>
    <property type="project" value="UniProtKB-KW"/>
</dbReference>
<dbReference type="GO" id="GO:0055085">
    <property type="term" value="P:transmembrane transport"/>
    <property type="evidence" value="ECO:0000318"/>
    <property type="project" value="GO_Central"/>
</dbReference>
<dbReference type="FunFam" id="1.10.3730.20:FF:000001">
    <property type="entry name" value="Quaternary ammonium compound resistance transporter SugE"/>
    <property type="match status" value="1"/>
</dbReference>
<dbReference type="Gene3D" id="1.10.3730.20">
    <property type="match status" value="1"/>
</dbReference>
<dbReference type="InterPro" id="IPR000390">
    <property type="entry name" value="Small_drug/metabolite_transptr"/>
</dbReference>
<dbReference type="InterPro" id="IPR045324">
    <property type="entry name" value="Small_multidrug_res"/>
</dbReference>
<dbReference type="NCBIfam" id="NF008512">
    <property type="entry name" value="PRK11431.1"/>
    <property type="match status" value="1"/>
</dbReference>
<dbReference type="PANTHER" id="PTHR30561:SF0">
    <property type="entry name" value="GUANIDINIUM EXPORTER"/>
    <property type="match status" value="1"/>
</dbReference>
<dbReference type="PANTHER" id="PTHR30561">
    <property type="entry name" value="SMR FAMILY PROTON-DEPENDENT DRUG EFFLUX TRANSPORTER SUGE"/>
    <property type="match status" value="1"/>
</dbReference>
<dbReference type="Pfam" id="PF00893">
    <property type="entry name" value="Multi_Drug_Res"/>
    <property type="match status" value="1"/>
</dbReference>
<dbReference type="SUPFAM" id="SSF103481">
    <property type="entry name" value="Multidrug resistance efflux transporter EmrE"/>
    <property type="match status" value="1"/>
</dbReference>
<gene>
    <name evidence="1" type="primary">gdx</name>
    <name type="synonym">sugE</name>
    <name type="ordered locus">STM4338</name>
</gene>
<protein>
    <recommendedName>
        <fullName evidence="1">Guanidinium exporter</fullName>
    </recommendedName>
</protein>
<feature type="chain" id="PRO_0000108105" description="Guanidinium exporter">
    <location>
        <begin position="1"/>
        <end position="105"/>
    </location>
</feature>
<feature type="transmembrane region" description="Helical" evidence="2">
    <location>
        <begin position="1"/>
        <end position="21"/>
    </location>
</feature>
<feature type="topological domain" description="Cytoplasmic" evidence="2">
    <location>
        <begin position="22"/>
        <end position="28"/>
    </location>
</feature>
<feature type="transmembrane region" description="Helical" evidence="2">
    <location>
        <begin position="29"/>
        <end position="49"/>
    </location>
</feature>
<feature type="topological domain" description="Periplasmic" evidence="2">
    <location>
        <begin position="50"/>
        <end position="57"/>
    </location>
</feature>
<feature type="transmembrane region" description="Helical" evidence="2">
    <location>
        <begin position="58"/>
        <end position="78"/>
    </location>
</feature>
<feature type="topological domain" description="Cytoplasmic" evidence="2">
    <location>
        <begin position="79"/>
        <end position="81"/>
    </location>
</feature>
<feature type="transmembrane region" description="Helical" evidence="2">
    <location>
        <begin position="82"/>
        <end position="102"/>
    </location>
</feature>
<feature type="topological domain" description="Periplasmic" evidence="2">
    <location>
        <begin position="103"/>
        <end position="105"/>
    </location>
</feature>
<reference key="1">
    <citation type="journal article" date="2001" name="Nature">
        <title>Complete genome sequence of Salmonella enterica serovar Typhimurium LT2.</title>
        <authorList>
            <person name="McClelland M."/>
            <person name="Sanderson K.E."/>
            <person name="Spieth J."/>
            <person name="Clifton S.W."/>
            <person name="Latreille P."/>
            <person name="Courtney L."/>
            <person name="Porwollik S."/>
            <person name="Ali J."/>
            <person name="Dante M."/>
            <person name="Du F."/>
            <person name="Hou S."/>
            <person name="Layman D."/>
            <person name="Leonard S."/>
            <person name="Nguyen C."/>
            <person name="Scott K."/>
            <person name="Holmes A."/>
            <person name="Grewal N."/>
            <person name="Mulvaney E."/>
            <person name="Ryan E."/>
            <person name="Sun H."/>
            <person name="Florea L."/>
            <person name="Miller W."/>
            <person name="Stoneking T."/>
            <person name="Nhan M."/>
            <person name="Waterston R."/>
            <person name="Wilson R.K."/>
        </authorList>
    </citation>
    <scope>NUCLEOTIDE SEQUENCE [LARGE SCALE GENOMIC DNA]</scope>
    <source>
        <strain>LT2 / SGSC1412 / ATCC 700720</strain>
    </source>
</reference>
<name>GDX_SALTY</name>
<comment type="function">
    <text evidence="1">Guanidinium ion exporter. Couples guanidinium export to the proton motive force, exchanging one guanidinium ion for two protons.</text>
</comment>
<comment type="subcellular location">
    <subcellularLocation>
        <location evidence="1">Cell inner membrane</location>
        <topology evidence="1">Multi-pass membrane protein</topology>
    </subcellularLocation>
</comment>
<comment type="similarity">
    <text evidence="3">Belongs to the drug/metabolite transporter (DMT) superfamily. Small multidrug resistance (SMR) (TC 2.A.7.1) family. Gdx/SugE subfamily.</text>
</comment>
<keyword id="KW-0997">Cell inner membrane</keyword>
<keyword id="KW-1003">Cell membrane</keyword>
<keyword id="KW-0406">Ion transport</keyword>
<keyword id="KW-0472">Membrane</keyword>
<keyword id="KW-1185">Reference proteome</keyword>
<keyword id="KW-0812">Transmembrane</keyword>
<keyword id="KW-1133">Transmembrane helix</keyword>
<keyword id="KW-0813">Transport</keyword>